<gene>
    <name evidence="1" type="primary">pnp</name>
    <name type="ordered locus">VC_0647</name>
</gene>
<evidence type="ECO:0000255" key="1">
    <source>
        <dbReference type="HAMAP-Rule" id="MF_01595"/>
    </source>
</evidence>
<dbReference type="EC" id="2.7.7.8" evidence="1"/>
<dbReference type="EMBL" id="AE003852">
    <property type="protein sequence ID" value="AAF93813.1"/>
    <property type="molecule type" value="Genomic_DNA"/>
</dbReference>
<dbReference type="PIR" id="E82298">
    <property type="entry name" value="E82298"/>
</dbReference>
<dbReference type="RefSeq" id="NP_230296.1">
    <property type="nucleotide sequence ID" value="NC_002505.1"/>
</dbReference>
<dbReference type="RefSeq" id="WP_000462070.1">
    <property type="nucleotide sequence ID" value="NZ_LT906614.1"/>
</dbReference>
<dbReference type="SMR" id="Q9KU76"/>
<dbReference type="STRING" id="243277.VC_0647"/>
<dbReference type="DNASU" id="2615437"/>
<dbReference type="EnsemblBacteria" id="AAF93813">
    <property type="protein sequence ID" value="AAF93813"/>
    <property type="gene ID" value="VC_0647"/>
</dbReference>
<dbReference type="GeneID" id="69720597"/>
<dbReference type="KEGG" id="vch:VC_0647"/>
<dbReference type="PATRIC" id="fig|243277.26.peg.617"/>
<dbReference type="eggNOG" id="COG1185">
    <property type="taxonomic scope" value="Bacteria"/>
</dbReference>
<dbReference type="HOGENOM" id="CLU_004217_2_2_6"/>
<dbReference type="Proteomes" id="UP000000584">
    <property type="component" value="Chromosome 1"/>
</dbReference>
<dbReference type="GO" id="GO:0005829">
    <property type="term" value="C:cytosol"/>
    <property type="evidence" value="ECO:0000318"/>
    <property type="project" value="GO_Central"/>
</dbReference>
<dbReference type="GO" id="GO:0000175">
    <property type="term" value="F:3'-5'-RNA exonuclease activity"/>
    <property type="evidence" value="ECO:0000318"/>
    <property type="project" value="GO_Central"/>
</dbReference>
<dbReference type="GO" id="GO:0000287">
    <property type="term" value="F:magnesium ion binding"/>
    <property type="evidence" value="ECO:0007669"/>
    <property type="project" value="UniProtKB-UniRule"/>
</dbReference>
<dbReference type="GO" id="GO:0004654">
    <property type="term" value="F:polyribonucleotide nucleotidyltransferase activity"/>
    <property type="evidence" value="ECO:0000318"/>
    <property type="project" value="GO_Central"/>
</dbReference>
<dbReference type="GO" id="GO:0003723">
    <property type="term" value="F:RNA binding"/>
    <property type="evidence" value="ECO:0007669"/>
    <property type="project" value="UniProtKB-UniRule"/>
</dbReference>
<dbReference type="GO" id="GO:0006402">
    <property type="term" value="P:mRNA catabolic process"/>
    <property type="evidence" value="ECO:0007669"/>
    <property type="project" value="UniProtKB-UniRule"/>
</dbReference>
<dbReference type="GO" id="GO:0006401">
    <property type="term" value="P:RNA catabolic process"/>
    <property type="evidence" value="ECO:0000318"/>
    <property type="project" value="GO_Central"/>
</dbReference>
<dbReference type="GO" id="GO:0006396">
    <property type="term" value="P:RNA processing"/>
    <property type="evidence" value="ECO:0007669"/>
    <property type="project" value="InterPro"/>
</dbReference>
<dbReference type="CDD" id="cd02393">
    <property type="entry name" value="KH-I_PNPase"/>
    <property type="match status" value="1"/>
</dbReference>
<dbReference type="CDD" id="cd11363">
    <property type="entry name" value="RNase_PH_PNPase_1"/>
    <property type="match status" value="1"/>
</dbReference>
<dbReference type="CDD" id="cd11364">
    <property type="entry name" value="RNase_PH_PNPase_2"/>
    <property type="match status" value="1"/>
</dbReference>
<dbReference type="CDD" id="cd04472">
    <property type="entry name" value="S1_PNPase"/>
    <property type="match status" value="1"/>
</dbReference>
<dbReference type="FunFam" id="2.40.50.140:FF:000023">
    <property type="entry name" value="Polyribonucleotide nucleotidyltransferase"/>
    <property type="match status" value="1"/>
</dbReference>
<dbReference type="FunFam" id="3.30.1370.10:FF:000001">
    <property type="entry name" value="Polyribonucleotide nucleotidyltransferase"/>
    <property type="match status" value="1"/>
</dbReference>
<dbReference type="FunFam" id="3.30.230.70:FF:000001">
    <property type="entry name" value="Polyribonucleotide nucleotidyltransferase"/>
    <property type="match status" value="1"/>
</dbReference>
<dbReference type="FunFam" id="3.30.230.70:FF:000002">
    <property type="entry name" value="Polyribonucleotide nucleotidyltransferase"/>
    <property type="match status" value="1"/>
</dbReference>
<dbReference type="Gene3D" id="3.30.230.70">
    <property type="entry name" value="GHMP Kinase, N-terminal domain"/>
    <property type="match status" value="2"/>
</dbReference>
<dbReference type="Gene3D" id="3.30.1370.10">
    <property type="entry name" value="K Homology domain, type 1"/>
    <property type="match status" value="1"/>
</dbReference>
<dbReference type="Gene3D" id="2.40.50.140">
    <property type="entry name" value="Nucleic acid-binding proteins"/>
    <property type="match status" value="1"/>
</dbReference>
<dbReference type="HAMAP" id="MF_01595">
    <property type="entry name" value="PNPase"/>
    <property type="match status" value="1"/>
</dbReference>
<dbReference type="InterPro" id="IPR001247">
    <property type="entry name" value="ExoRNase_PH_dom1"/>
</dbReference>
<dbReference type="InterPro" id="IPR015847">
    <property type="entry name" value="ExoRNase_PH_dom2"/>
</dbReference>
<dbReference type="InterPro" id="IPR036345">
    <property type="entry name" value="ExoRNase_PH_dom2_sf"/>
</dbReference>
<dbReference type="InterPro" id="IPR004087">
    <property type="entry name" value="KH_dom"/>
</dbReference>
<dbReference type="InterPro" id="IPR004088">
    <property type="entry name" value="KH_dom_type_1"/>
</dbReference>
<dbReference type="InterPro" id="IPR036612">
    <property type="entry name" value="KH_dom_type_1_sf"/>
</dbReference>
<dbReference type="InterPro" id="IPR012340">
    <property type="entry name" value="NA-bd_OB-fold"/>
</dbReference>
<dbReference type="InterPro" id="IPR012162">
    <property type="entry name" value="PNPase"/>
</dbReference>
<dbReference type="InterPro" id="IPR027408">
    <property type="entry name" value="PNPase/RNase_PH_dom_sf"/>
</dbReference>
<dbReference type="InterPro" id="IPR015848">
    <property type="entry name" value="PNPase_PH_RNA-bd_bac/org-type"/>
</dbReference>
<dbReference type="InterPro" id="IPR020568">
    <property type="entry name" value="Ribosomal_Su5_D2-typ_SF"/>
</dbReference>
<dbReference type="InterPro" id="IPR003029">
    <property type="entry name" value="S1_domain"/>
</dbReference>
<dbReference type="NCBIfam" id="TIGR03591">
    <property type="entry name" value="polynuc_phos"/>
    <property type="match status" value="1"/>
</dbReference>
<dbReference type="NCBIfam" id="NF008805">
    <property type="entry name" value="PRK11824.1"/>
    <property type="match status" value="1"/>
</dbReference>
<dbReference type="PANTHER" id="PTHR11252">
    <property type="entry name" value="POLYRIBONUCLEOTIDE NUCLEOTIDYLTRANSFERASE"/>
    <property type="match status" value="1"/>
</dbReference>
<dbReference type="PANTHER" id="PTHR11252:SF0">
    <property type="entry name" value="POLYRIBONUCLEOTIDE NUCLEOTIDYLTRANSFERASE 1, MITOCHONDRIAL"/>
    <property type="match status" value="1"/>
</dbReference>
<dbReference type="Pfam" id="PF00013">
    <property type="entry name" value="KH_1"/>
    <property type="match status" value="1"/>
</dbReference>
<dbReference type="Pfam" id="PF03726">
    <property type="entry name" value="PNPase"/>
    <property type="match status" value="1"/>
</dbReference>
<dbReference type="Pfam" id="PF01138">
    <property type="entry name" value="RNase_PH"/>
    <property type="match status" value="2"/>
</dbReference>
<dbReference type="Pfam" id="PF03725">
    <property type="entry name" value="RNase_PH_C"/>
    <property type="match status" value="2"/>
</dbReference>
<dbReference type="Pfam" id="PF00575">
    <property type="entry name" value="S1"/>
    <property type="match status" value="1"/>
</dbReference>
<dbReference type="PIRSF" id="PIRSF005499">
    <property type="entry name" value="PNPase"/>
    <property type="match status" value="1"/>
</dbReference>
<dbReference type="SMART" id="SM00322">
    <property type="entry name" value="KH"/>
    <property type="match status" value="1"/>
</dbReference>
<dbReference type="SMART" id="SM00316">
    <property type="entry name" value="S1"/>
    <property type="match status" value="1"/>
</dbReference>
<dbReference type="SUPFAM" id="SSF54791">
    <property type="entry name" value="Eukaryotic type KH-domain (KH-domain type I)"/>
    <property type="match status" value="1"/>
</dbReference>
<dbReference type="SUPFAM" id="SSF50249">
    <property type="entry name" value="Nucleic acid-binding proteins"/>
    <property type="match status" value="1"/>
</dbReference>
<dbReference type="SUPFAM" id="SSF55666">
    <property type="entry name" value="Ribonuclease PH domain 2-like"/>
    <property type="match status" value="2"/>
</dbReference>
<dbReference type="SUPFAM" id="SSF54211">
    <property type="entry name" value="Ribosomal protein S5 domain 2-like"/>
    <property type="match status" value="2"/>
</dbReference>
<dbReference type="PROSITE" id="PS50084">
    <property type="entry name" value="KH_TYPE_1"/>
    <property type="match status" value="1"/>
</dbReference>
<dbReference type="PROSITE" id="PS50126">
    <property type="entry name" value="S1"/>
    <property type="match status" value="1"/>
</dbReference>
<feature type="chain" id="PRO_0000329927" description="Polyribonucleotide nucleotidyltransferase">
    <location>
        <begin position="1"/>
        <end position="709"/>
    </location>
</feature>
<feature type="domain" description="KH" evidence="1">
    <location>
        <begin position="554"/>
        <end position="613"/>
    </location>
</feature>
<feature type="domain" description="S1 motif" evidence="1">
    <location>
        <begin position="623"/>
        <end position="691"/>
    </location>
</feature>
<feature type="binding site" evidence="1">
    <location>
        <position position="487"/>
    </location>
    <ligand>
        <name>Mg(2+)</name>
        <dbReference type="ChEBI" id="CHEBI:18420"/>
    </ligand>
</feature>
<feature type="binding site" evidence="1">
    <location>
        <position position="493"/>
    </location>
    <ligand>
        <name>Mg(2+)</name>
        <dbReference type="ChEBI" id="CHEBI:18420"/>
    </ligand>
</feature>
<reference key="1">
    <citation type="journal article" date="2000" name="Nature">
        <title>DNA sequence of both chromosomes of the cholera pathogen Vibrio cholerae.</title>
        <authorList>
            <person name="Heidelberg J.F."/>
            <person name="Eisen J.A."/>
            <person name="Nelson W.C."/>
            <person name="Clayton R.A."/>
            <person name="Gwinn M.L."/>
            <person name="Dodson R.J."/>
            <person name="Haft D.H."/>
            <person name="Hickey E.K."/>
            <person name="Peterson J.D."/>
            <person name="Umayam L.A."/>
            <person name="Gill S.R."/>
            <person name="Nelson K.E."/>
            <person name="Read T.D."/>
            <person name="Tettelin H."/>
            <person name="Richardson D.L."/>
            <person name="Ermolaeva M.D."/>
            <person name="Vamathevan J.J."/>
            <person name="Bass S."/>
            <person name="Qin H."/>
            <person name="Dragoi I."/>
            <person name="Sellers P."/>
            <person name="McDonald L.A."/>
            <person name="Utterback T.R."/>
            <person name="Fleischmann R.D."/>
            <person name="Nierman W.C."/>
            <person name="White O."/>
            <person name="Salzberg S.L."/>
            <person name="Smith H.O."/>
            <person name="Colwell R.R."/>
            <person name="Mekalanos J.J."/>
            <person name="Venter J.C."/>
            <person name="Fraser C.M."/>
        </authorList>
    </citation>
    <scope>NUCLEOTIDE SEQUENCE [LARGE SCALE GENOMIC DNA]</scope>
    <source>
        <strain>ATCC 39315 / El Tor Inaba N16961</strain>
    </source>
</reference>
<protein>
    <recommendedName>
        <fullName evidence="1">Polyribonucleotide nucleotidyltransferase</fullName>
        <ecNumber evidence="1">2.7.7.8</ecNumber>
    </recommendedName>
    <alternativeName>
        <fullName evidence="1">Polynucleotide phosphorylase</fullName>
        <shortName evidence="1">PNPase</shortName>
    </alternativeName>
</protein>
<keyword id="KW-0963">Cytoplasm</keyword>
<keyword id="KW-0460">Magnesium</keyword>
<keyword id="KW-0479">Metal-binding</keyword>
<keyword id="KW-0548">Nucleotidyltransferase</keyword>
<keyword id="KW-1185">Reference proteome</keyword>
<keyword id="KW-0694">RNA-binding</keyword>
<keyword id="KW-0808">Transferase</keyword>
<sequence length="709" mass="76585">MFEKPVVKTFQYGNHTVTLETGVMARQATAAVMATMDDTAVFVSVVGKKEAVVGQDFFPLTVNYQERTYAAGKIPGGFFKREGRPSEGETLIARLIDRPIRPLFPDGFTNEVQVIATVVSVNPDVQPDIISMIGTSAALAISGLPFNGPIGAARVGHIDGQLVLNPSEKELKQSRLDLVVAGTDNAVLMVESEAQILTEEEMLAAVVFGHDQQQAVIKAINEFAAEVATPAWEWVAPAENTELKAKVAALAETRLVEAYQITEKMARYDRIHEISAEVTAALLAENEALDTKEIHTIFHDLEKTVVRRSIIAGNPRIDGREKDMVRALDVRTGVLPRTHGSALFTRGETQALVTATLGTQRDAQIIDELTGEKKDHFLLHYNFPPYCVGETGFVGSPKRREIGHGRLAKRGIAAVMPSPEEFPYTVRVVSEITESNGSSSMASVCGSSLALMDAGVPIKASVAGIAMGLVKEENDFVVLSDILGDEDHLGDMDFKVAGTATGVTALQMDIKIEGITKEIMQIALNQAKGARLHILSVMDQAISAARSDISEFAPRIHTMKISVEKIKDVIGKGGAVIRQLTEETGTTIEIEDDGTIKIAATDGDQAKEAIRRIQEITAEVEVGVIYTGKVARLADFGAFVTILPGKDGLVHISQIADKRVEKVSDYLTEGQEVQVKVLEIDRQGRVRLSMKEAVETSDAAAAEVAPQAE</sequence>
<organism>
    <name type="scientific">Vibrio cholerae serotype O1 (strain ATCC 39315 / El Tor Inaba N16961)</name>
    <dbReference type="NCBI Taxonomy" id="243277"/>
    <lineage>
        <taxon>Bacteria</taxon>
        <taxon>Pseudomonadati</taxon>
        <taxon>Pseudomonadota</taxon>
        <taxon>Gammaproteobacteria</taxon>
        <taxon>Vibrionales</taxon>
        <taxon>Vibrionaceae</taxon>
        <taxon>Vibrio</taxon>
    </lineage>
</organism>
<comment type="function">
    <text evidence="1">Involved in mRNA degradation. Catalyzes the phosphorolysis of single-stranded polyribonucleotides processively in the 3'- to 5'-direction.</text>
</comment>
<comment type="catalytic activity">
    <reaction evidence="1">
        <text>RNA(n+1) + phosphate = RNA(n) + a ribonucleoside 5'-diphosphate</text>
        <dbReference type="Rhea" id="RHEA:22096"/>
        <dbReference type="Rhea" id="RHEA-COMP:14527"/>
        <dbReference type="Rhea" id="RHEA-COMP:17342"/>
        <dbReference type="ChEBI" id="CHEBI:43474"/>
        <dbReference type="ChEBI" id="CHEBI:57930"/>
        <dbReference type="ChEBI" id="CHEBI:140395"/>
        <dbReference type="EC" id="2.7.7.8"/>
    </reaction>
</comment>
<comment type="cofactor">
    <cofactor evidence="1">
        <name>Mg(2+)</name>
        <dbReference type="ChEBI" id="CHEBI:18420"/>
    </cofactor>
</comment>
<comment type="subunit">
    <text evidence="1">Component of the RNA degradosome, which is a multiprotein complex involved in RNA processing and mRNA degradation.</text>
</comment>
<comment type="subcellular location">
    <subcellularLocation>
        <location evidence="1">Cytoplasm</location>
    </subcellularLocation>
</comment>
<comment type="similarity">
    <text evidence="1">Belongs to the polyribonucleotide nucleotidyltransferase family.</text>
</comment>
<proteinExistence type="inferred from homology"/>
<name>PNP_VIBCH</name>
<accession>Q9KU76</accession>